<comment type="function">
    <text evidence="3">Snake venom VEGFs that may contribute to venom dispersion and prey subjugation by inducing vascular permeability and hypotension. This protein induces an increase in capillary permeability after intradermal injection, as well as a drastic hypotensive effect after intravenous injection. The hypotension is mediated by nitric oxide (NO), which is produced by VEGF-activated endothelium NO synthase. Also induces angiogenesis in vitro, probably through VEGF receptor (KDR/VEGFR-2) signaling.</text>
</comment>
<comment type="subunit">
    <text evidence="5">Homodimer; disulfide-linked. Interacts with high affinity with VEGF receptor-2 (KDR), and with a lower affinity with VEGF receptor-1 (FLT1). Does not bind VEGF receptor-3 (FLT4) and neuropilin-1 (NRP1).</text>
</comment>
<comment type="subcellular location">
    <subcellularLocation>
        <location evidence="5">Secreted</location>
    </subcellularLocation>
</comment>
<comment type="tissue specificity">
    <text evidence="7">Expressed by the venom gland.</text>
</comment>
<comment type="similarity">
    <text evidence="7">Belongs to the PDGF/VEGF growth factor family. Snake venom VEGF subfamily.</text>
</comment>
<proteinExistence type="evidence at protein level"/>
<organism>
    <name type="scientific">Bitis arietans</name>
    <name type="common">African puff adder</name>
    <dbReference type="NCBI Taxonomy" id="8692"/>
    <lineage>
        <taxon>Eukaryota</taxon>
        <taxon>Metazoa</taxon>
        <taxon>Chordata</taxon>
        <taxon>Craniata</taxon>
        <taxon>Vertebrata</taxon>
        <taxon>Euteleostomi</taxon>
        <taxon>Lepidosauria</taxon>
        <taxon>Squamata</taxon>
        <taxon>Bifurcata</taxon>
        <taxon>Unidentata</taxon>
        <taxon>Episquamata</taxon>
        <taxon>Toxicofera</taxon>
        <taxon>Serpentes</taxon>
        <taxon>Colubroidea</taxon>
        <taxon>Viperidae</taxon>
        <taxon>Viperinae</taxon>
        <taxon>Bitis</taxon>
    </lineage>
</organism>
<accession>C0K3N1</accession>
<sequence length="150" mass="16623">MAAYLLAVAILFCIQGWPSGTVQGEVRPFMEVYQRSVCQPRETLVSILEEYPDKISKIFRPSCVAVLRCGGCCSDESLTCTSVGERTVELQVMQVTPKTLSSKIKVMKFREHTACECRPRSGSRVNIGKHKRSPEEGEREPSSPLTPGSL</sequence>
<feature type="signal peptide" evidence="5">
    <location>
        <begin position="1"/>
        <end position="24"/>
    </location>
</feature>
<feature type="chain" id="PRO_5000452060" description="Snake venom vascular endothelial growth factor toxin barietin">
    <location>
        <begin position="25"/>
        <end position="121"/>
    </location>
</feature>
<feature type="propeptide" id="PRO_0000406348">
    <location>
        <begin position="122"/>
        <end position="150"/>
    </location>
</feature>
<feature type="region of interest" description="Disordered" evidence="4">
    <location>
        <begin position="119"/>
        <end position="150"/>
    </location>
</feature>
<feature type="modified residue" description="Pyrrolidone carboxylic acid (Glu)" evidence="1">
    <location>
        <position position="25"/>
    </location>
</feature>
<feature type="disulfide bond" evidence="2">
    <location>
        <begin position="38"/>
        <end position="80"/>
    </location>
</feature>
<feature type="disulfide bond" description="Interchain (with C-72)" evidence="2">
    <location>
        <position position="63"/>
    </location>
</feature>
<feature type="disulfide bond" evidence="2">
    <location>
        <begin position="69"/>
        <end position="115"/>
    </location>
</feature>
<feature type="disulfide bond" description="Interchain (with C-63)" evidence="2">
    <location>
        <position position="72"/>
    </location>
</feature>
<feature type="disulfide bond" evidence="2">
    <location>
        <begin position="73"/>
        <end position="117"/>
    </location>
</feature>
<name>TXVE_BITAR</name>
<keyword id="KW-0903">Direct protein sequencing</keyword>
<keyword id="KW-1015">Disulfide bond</keyword>
<keyword id="KW-0339">Growth factor</keyword>
<keyword id="KW-0873">Pyrrolidone carboxylic acid</keyword>
<keyword id="KW-0964">Secreted</keyword>
<keyword id="KW-0732">Signal</keyword>
<keyword id="KW-0800">Toxin</keyword>
<evidence type="ECO:0000250" key="1">
    <source>
        <dbReference type="UniProtKB" id="P0DL42"/>
    </source>
</evidence>
<evidence type="ECO:0000250" key="2">
    <source>
        <dbReference type="UniProtKB" id="P67863"/>
    </source>
</evidence>
<evidence type="ECO:0000250" key="3">
    <source>
        <dbReference type="UniProtKB" id="P83942"/>
    </source>
</evidence>
<evidence type="ECO:0000256" key="4">
    <source>
        <dbReference type="SAM" id="MobiDB-lite"/>
    </source>
</evidence>
<evidence type="ECO:0000269" key="5">
    <source>
    </source>
</evidence>
<evidence type="ECO:0000303" key="6">
    <source>
    </source>
</evidence>
<evidence type="ECO:0000305" key="7"/>
<reference key="1">
    <citation type="journal article" date="2009" name="J. Biol. Chem.">
        <title>Snake venom vascular endothelial growth factors (VEGF-Fs) exclusively vary their structures and functions among species.</title>
        <authorList>
            <person name="Yamazaki Y."/>
            <person name="Matsunaga Y."/>
            <person name="Tokunaga Y."/>
            <person name="Obayashi S."/>
            <person name="Saito M."/>
            <person name="Morita T."/>
        </authorList>
    </citation>
    <scope>NUCLEOTIDE SEQUENCE [MRNA]</scope>
    <scope>PROTEIN SEQUENCE OF 25-29</scope>
    <scope>SUBUNIT</scope>
    <scope>INTERACTION WITH KDR AND FLT1</scope>
    <scope>SUBCELLULAR LOCATION</scope>
    <source>
        <tissue>Venom</tissue>
        <tissue>Venom gland</tissue>
    </source>
</reference>
<protein>
    <recommendedName>
        <fullName evidence="6">Snake venom vascular endothelial growth factor toxin barietin</fullName>
        <shortName>svVEGF</shortName>
    </recommendedName>
    <alternativeName>
        <fullName evidence="1">VEGF-F</fullName>
    </alternativeName>
</protein>
<dbReference type="EMBL" id="FJ554635">
    <property type="protein sequence ID" value="ACN22038.1"/>
    <property type="molecule type" value="mRNA"/>
</dbReference>
<dbReference type="SMR" id="C0K3N1"/>
<dbReference type="GO" id="GO:0005615">
    <property type="term" value="C:extracellular space"/>
    <property type="evidence" value="ECO:0007669"/>
    <property type="project" value="TreeGrafter"/>
</dbReference>
<dbReference type="GO" id="GO:0016020">
    <property type="term" value="C:membrane"/>
    <property type="evidence" value="ECO:0007669"/>
    <property type="project" value="InterPro"/>
</dbReference>
<dbReference type="GO" id="GO:0042056">
    <property type="term" value="F:chemoattractant activity"/>
    <property type="evidence" value="ECO:0007669"/>
    <property type="project" value="TreeGrafter"/>
</dbReference>
<dbReference type="GO" id="GO:0008083">
    <property type="term" value="F:growth factor activity"/>
    <property type="evidence" value="ECO:0007669"/>
    <property type="project" value="UniProtKB-KW"/>
</dbReference>
<dbReference type="GO" id="GO:0090729">
    <property type="term" value="F:toxin activity"/>
    <property type="evidence" value="ECO:0007669"/>
    <property type="project" value="UniProtKB-KW"/>
</dbReference>
<dbReference type="GO" id="GO:0005172">
    <property type="term" value="F:vascular endothelial growth factor receptor binding"/>
    <property type="evidence" value="ECO:0007669"/>
    <property type="project" value="TreeGrafter"/>
</dbReference>
<dbReference type="GO" id="GO:0050930">
    <property type="term" value="P:induction of positive chemotaxis"/>
    <property type="evidence" value="ECO:0007669"/>
    <property type="project" value="TreeGrafter"/>
</dbReference>
<dbReference type="GO" id="GO:0045766">
    <property type="term" value="P:positive regulation of angiogenesis"/>
    <property type="evidence" value="ECO:0007669"/>
    <property type="project" value="TreeGrafter"/>
</dbReference>
<dbReference type="GO" id="GO:0001938">
    <property type="term" value="P:positive regulation of endothelial cell proliferation"/>
    <property type="evidence" value="ECO:0007669"/>
    <property type="project" value="TreeGrafter"/>
</dbReference>
<dbReference type="GO" id="GO:0060754">
    <property type="term" value="P:positive regulation of mast cell chemotaxis"/>
    <property type="evidence" value="ECO:0007669"/>
    <property type="project" value="TreeGrafter"/>
</dbReference>
<dbReference type="GO" id="GO:0001666">
    <property type="term" value="P:response to hypoxia"/>
    <property type="evidence" value="ECO:0007669"/>
    <property type="project" value="TreeGrafter"/>
</dbReference>
<dbReference type="GO" id="GO:0002040">
    <property type="term" value="P:sprouting angiogenesis"/>
    <property type="evidence" value="ECO:0007669"/>
    <property type="project" value="TreeGrafter"/>
</dbReference>
<dbReference type="GO" id="GO:0048010">
    <property type="term" value="P:vascular endothelial growth factor receptor signaling pathway"/>
    <property type="evidence" value="ECO:0007669"/>
    <property type="project" value="TreeGrafter"/>
</dbReference>
<dbReference type="GO" id="GO:0038084">
    <property type="term" value="P:vascular endothelial growth factor signaling pathway"/>
    <property type="evidence" value="ECO:0007669"/>
    <property type="project" value="TreeGrafter"/>
</dbReference>
<dbReference type="CDD" id="cd00135">
    <property type="entry name" value="PDGF"/>
    <property type="match status" value="1"/>
</dbReference>
<dbReference type="Gene3D" id="2.10.90.10">
    <property type="entry name" value="Cystine-knot cytokines"/>
    <property type="match status" value="1"/>
</dbReference>
<dbReference type="InterPro" id="IPR029034">
    <property type="entry name" value="Cystine-knot_cytokine"/>
</dbReference>
<dbReference type="InterPro" id="IPR023581">
    <property type="entry name" value="PD_growth_factor_CS"/>
</dbReference>
<dbReference type="InterPro" id="IPR000072">
    <property type="entry name" value="PDGF/VEGF_dom"/>
</dbReference>
<dbReference type="InterPro" id="IPR050507">
    <property type="entry name" value="PDGF/VEGF_growth_factor"/>
</dbReference>
<dbReference type="PANTHER" id="PTHR12025">
    <property type="entry name" value="VASCULAR ENDOTHELIAL GROWTH FACTOR"/>
    <property type="match status" value="1"/>
</dbReference>
<dbReference type="PANTHER" id="PTHR12025:SF5">
    <property type="entry name" value="VASCULAR ENDOTHELIAL GROWTH FACTOR A, LONG FORM"/>
    <property type="match status" value="1"/>
</dbReference>
<dbReference type="Pfam" id="PF00341">
    <property type="entry name" value="PDGF"/>
    <property type="match status" value="1"/>
</dbReference>
<dbReference type="SMART" id="SM00141">
    <property type="entry name" value="PDGF"/>
    <property type="match status" value="1"/>
</dbReference>
<dbReference type="SUPFAM" id="SSF57501">
    <property type="entry name" value="Cystine-knot cytokines"/>
    <property type="match status" value="1"/>
</dbReference>
<dbReference type="PROSITE" id="PS00249">
    <property type="entry name" value="PDGF_1"/>
    <property type="match status" value="1"/>
</dbReference>
<dbReference type="PROSITE" id="PS50278">
    <property type="entry name" value="PDGF_2"/>
    <property type="match status" value="1"/>
</dbReference>